<name>YIDC_RUTMC</name>
<feature type="chain" id="PRO_1000070160" description="Membrane protein insertase YidC">
    <location>
        <begin position="1"/>
        <end position="541"/>
    </location>
</feature>
<feature type="transmembrane region" description="Helical" evidence="1">
    <location>
        <begin position="7"/>
        <end position="27"/>
    </location>
</feature>
<feature type="transmembrane region" description="Helical" evidence="1">
    <location>
        <begin position="289"/>
        <end position="309"/>
    </location>
</feature>
<feature type="transmembrane region" description="Helical" evidence="1">
    <location>
        <begin position="356"/>
        <end position="376"/>
    </location>
</feature>
<feature type="transmembrane region" description="Helical" evidence="1">
    <location>
        <begin position="430"/>
        <end position="450"/>
    </location>
</feature>
<feature type="transmembrane region" description="Helical" evidence="1">
    <location>
        <begin position="463"/>
        <end position="483"/>
    </location>
</feature>
<feature type="transmembrane region" description="Helical" evidence="1">
    <location>
        <begin position="498"/>
        <end position="518"/>
    </location>
</feature>
<gene>
    <name evidence="1" type="primary">yidC</name>
    <name type="ordered locus">Rmag_1040</name>
</gene>
<reference key="1">
    <citation type="journal article" date="2007" name="Science">
        <title>The Calyptogena magnifica chemoautotrophic symbiont genome.</title>
        <authorList>
            <person name="Newton I.L.G."/>
            <person name="Woyke T."/>
            <person name="Auchtung T.A."/>
            <person name="Dilly G.F."/>
            <person name="Dutton R.J."/>
            <person name="Fisher M.C."/>
            <person name="Fontanez K.M."/>
            <person name="Lau E."/>
            <person name="Stewart F.J."/>
            <person name="Richardson P.M."/>
            <person name="Barry K.W."/>
            <person name="Saunders E."/>
            <person name="Detter J.C."/>
            <person name="Wu D."/>
            <person name="Eisen J.A."/>
            <person name="Cavanaugh C.M."/>
        </authorList>
    </citation>
    <scope>NUCLEOTIDE SEQUENCE [LARGE SCALE GENOMIC DNA]</scope>
</reference>
<dbReference type="EMBL" id="CP000488">
    <property type="protein sequence ID" value="ABL02744.1"/>
    <property type="molecule type" value="Genomic_DNA"/>
</dbReference>
<dbReference type="RefSeq" id="WP_011738369.1">
    <property type="nucleotide sequence ID" value="NC_008610.1"/>
</dbReference>
<dbReference type="SMR" id="A1AXT7"/>
<dbReference type="STRING" id="413404.Rmag_1040"/>
<dbReference type="KEGG" id="rma:Rmag_1040"/>
<dbReference type="eggNOG" id="COG0706">
    <property type="taxonomic scope" value="Bacteria"/>
</dbReference>
<dbReference type="HOGENOM" id="CLU_016535_3_0_6"/>
<dbReference type="OrthoDB" id="9780552at2"/>
<dbReference type="Proteomes" id="UP000002587">
    <property type="component" value="Chromosome"/>
</dbReference>
<dbReference type="GO" id="GO:0005886">
    <property type="term" value="C:plasma membrane"/>
    <property type="evidence" value="ECO:0007669"/>
    <property type="project" value="UniProtKB-SubCell"/>
</dbReference>
<dbReference type="GO" id="GO:0032977">
    <property type="term" value="F:membrane insertase activity"/>
    <property type="evidence" value="ECO:0007669"/>
    <property type="project" value="InterPro"/>
</dbReference>
<dbReference type="GO" id="GO:0051205">
    <property type="term" value="P:protein insertion into membrane"/>
    <property type="evidence" value="ECO:0007669"/>
    <property type="project" value="TreeGrafter"/>
</dbReference>
<dbReference type="GO" id="GO:0015031">
    <property type="term" value="P:protein transport"/>
    <property type="evidence" value="ECO:0007669"/>
    <property type="project" value="UniProtKB-KW"/>
</dbReference>
<dbReference type="CDD" id="cd20070">
    <property type="entry name" value="5TM_YidC_Alb3"/>
    <property type="match status" value="1"/>
</dbReference>
<dbReference type="CDD" id="cd19961">
    <property type="entry name" value="EcYidC-like_peri"/>
    <property type="match status" value="1"/>
</dbReference>
<dbReference type="Gene3D" id="2.70.98.90">
    <property type="match status" value="1"/>
</dbReference>
<dbReference type="HAMAP" id="MF_01810">
    <property type="entry name" value="YidC_type1"/>
    <property type="match status" value="1"/>
</dbReference>
<dbReference type="InterPro" id="IPR019998">
    <property type="entry name" value="Membr_insert_YidC"/>
</dbReference>
<dbReference type="InterPro" id="IPR028053">
    <property type="entry name" value="Membr_insert_YidC_N"/>
</dbReference>
<dbReference type="InterPro" id="IPR001708">
    <property type="entry name" value="YidC/ALB3/OXA1/COX18"/>
</dbReference>
<dbReference type="InterPro" id="IPR028055">
    <property type="entry name" value="YidC/Oxa/ALB_C"/>
</dbReference>
<dbReference type="InterPro" id="IPR047196">
    <property type="entry name" value="YidC_ALB_C"/>
</dbReference>
<dbReference type="InterPro" id="IPR038221">
    <property type="entry name" value="YidC_periplasmic_sf"/>
</dbReference>
<dbReference type="NCBIfam" id="NF002352">
    <property type="entry name" value="PRK01318.1-3"/>
    <property type="match status" value="1"/>
</dbReference>
<dbReference type="NCBIfam" id="TIGR03593">
    <property type="entry name" value="yidC_nterm"/>
    <property type="match status" value="1"/>
</dbReference>
<dbReference type="NCBIfam" id="TIGR03592">
    <property type="entry name" value="yidC_oxa1_cterm"/>
    <property type="match status" value="1"/>
</dbReference>
<dbReference type="PANTHER" id="PTHR12428:SF65">
    <property type="entry name" value="CYTOCHROME C OXIDASE ASSEMBLY PROTEIN COX18, MITOCHONDRIAL"/>
    <property type="match status" value="1"/>
</dbReference>
<dbReference type="PANTHER" id="PTHR12428">
    <property type="entry name" value="OXA1"/>
    <property type="match status" value="1"/>
</dbReference>
<dbReference type="Pfam" id="PF02096">
    <property type="entry name" value="60KD_IMP"/>
    <property type="match status" value="1"/>
</dbReference>
<dbReference type="Pfam" id="PF14849">
    <property type="entry name" value="YidC_periplas"/>
    <property type="match status" value="1"/>
</dbReference>
<dbReference type="PRINTS" id="PR00701">
    <property type="entry name" value="60KDINNERMP"/>
</dbReference>
<dbReference type="PRINTS" id="PR01900">
    <property type="entry name" value="YIDCPROTEIN"/>
</dbReference>
<organism>
    <name type="scientific">Ruthia magnifica subsp. Calyptogena magnifica</name>
    <dbReference type="NCBI Taxonomy" id="413404"/>
    <lineage>
        <taxon>Bacteria</taxon>
        <taxon>Pseudomonadati</taxon>
        <taxon>Pseudomonadota</taxon>
        <taxon>Gammaproteobacteria</taxon>
        <taxon>Candidatus Pseudothioglobaceae</taxon>
        <taxon>Candidatus Ruthturnera</taxon>
    </lineage>
</organism>
<proteinExistence type="inferred from homology"/>
<keyword id="KW-0997">Cell inner membrane</keyword>
<keyword id="KW-1003">Cell membrane</keyword>
<keyword id="KW-0143">Chaperone</keyword>
<keyword id="KW-0472">Membrane</keyword>
<keyword id="KW-0653">Protein transport</keyword>
<keyword id="KW-0812">Transmembrane</keyword>
<keyword id="KW-1133">Transmembrane helix</keyword>
<keyword id="KW-0813">Transport</keyword>
<evidence type="ECO:0000255" key="1">
    <source>
        <dbReference type="HAMAP-Rule" id="MF_01810"/>
    </source>
</evidence>
<sequence length="541" mass="61382">MNNQKNFLIVAIFLSVFLLWDKWGVTHVVGANGNLISQTKIKDASTINNSLTNKNLNASSIIHRNAELDLPNTITKNQAPFTTVVTDLLTLEISHKGGTIQNAWLNDYPIEINSEQKFQLLSNKADEIFQAQSGLLPQGQTPTHHSIFSSKNSHYQMDGNSLVVPFTWKSENGIKVIKRYHFNKNSYVIGIDYQITNTTNNTLNITSYTQLVRNALDQSNMIIPTYTGGARFDDQDVYEKIEFEDFNDQPKTTSKGGWIAMIEHYFFVAAIPDVNQIHTYSSKIINGEYLLTVVNPELVIAPGAIVTLPSSSLYIGPKEQKQINNVAPGLDKTVDYGVLFIIAKPLSELLNWIYSIIHSWGYSIITLTLLIKLAFYKLSEKSYRSMAGMRQLAPRLTKLKETYGDDKQKLGQKTMELYKKEKINPASGCLPILVQIPVFISLYWVLLEMVELRQAPFWYLTDLSAQDPYYILPLIMGVSMFAQQKLNPPPPDPMQAKIMMALPFVFTIFFLWFPSGLVLYWVVNNILSITQQWVINKRING</sequence>
<accession>A1AXT7</accession>
<comment type="function">
    <text evidence="1">Required for the insertion and/or proper folding and/or complex formation of integral membrane proteins into the membrane. Involved in integration of membrane proteins that insert both dependently and independently of the Sec translocase complex, as well as at least some lipoproteins. Aids folding of multispanning membrane proteins.</text>
</comment>
<comment type="subunit">
    <text evidence="1">Interacts with the Sec translocase complex via SecD. Specifically interacts with transmembrane segments of nascent integral membrane proteins during membrane integration.</text>
</comment>
<comment type="subcellular location">
    <subcellularLocation>
        <location evidence="1">Cell inner membrane</location>
        <topology evidence="1">Multi-pass membrane protein</topology>
    </subcellularLocation>
</comment>
<comment type="similarity">
    <text evidence="1">Belongs to the OXA1/ALB3/YidC family. Type 1 subfamily.</text>
</comment>
<protein>
    <recommendedName>
        <fullName evidence="1">Membrane protein insertase YidC</fullName>
    </recommendedName>
    <alternativeName>
        <fullName evidence="1">Foldase YidC</fullName>
    </alternativeName>
    <alternativeName>
        <fullName evidence="1">Membrane integrase YidC</fullName>
    </alternativeName>
    <alternativeName>
        <fullName evidence="1">Membrane protein YidC</fullName>
    </alternativeName>
</protein>